<accession>Q82XP7</accession>
<gene>
    <name evidence="1" type="primary">glmU</name>
    <name type="ordered locus">NE0208</name>
</gene>
<sequence length="458" mass="49947">MLQVDVVILAAGMGKRMCSSLPKVLHPLAGKPILSHVLDIARTLSPERICVVFGYGGELVRQVIGDHSDLIWVKQAQQLGTGHAVKQALPYLGNKGVTLVLFGDVPLVKSDTLKALIEKAREDNLVLLTVELDNPTGYGRIVRDPVTNRIQAIVEEKDASQSQKKIREINTGIMVLPNGRLGNWLDNLSDANTQGEYYLTDIIAMAVDAGIPIETSSPASDWEVSGVNDKIQLSILERAHQQDTANRLMEQGVMFADPARFDVRGRLVCGNDVEIDINCIFEGNVRLGNNVKIHANCILRNVIVSDGSVVHPFSLIEDAEVGKNCRIGPYARIRPGTQLDDAVHVGNFVEIKNSHIASESKVNHLSYVGDTEMGRRVNIGAGAITCNYDGAFKHRTVIEDDVFIGSDTQLVAPVTVARGSTIGAGSTITRDTPEGQLTLSRTKQTSIANWKRPRKDRN</sequence>
<keyword id="KW-0012">Acyltransferase</keyword>
<keyword id="KW-0133">Cell shape</keyword>
<keyword id="KW-0961">Cell wall biogenesis/degradation</keyword>
<keyword id="KW-0963">Cytoplasm</keyword>
<keyword id="KW-0460">Magnesium</keyword>
<keyword id="KW-0479">Metal-binding</keyword>
<keyword id="KW-0511">Multifunctional enzyme</keyword>
<keyword id="KW-0548">Nucleotidyltransferase</keyword>
<keyword id="KW-0573">Peptidoglycan synthesis</keyword>
<keyword id="KW-1185">Reference proteome</keyword>
<keyword id="KW-0677">Repeat</keyword>
<keyword id="KW-0808">Transferase</keyword>
<comment type="function">
    <text evidence="1">Catalyzes the last two sequential reactions in the de novo biosynthetic pathway for UDP-N-acetylglucosamine (UDP-GlcNAc). The C-terminal domain catalyzes the transfer of acetyl group from acetyl coenzyme A to glucosamine-1-phosphate (GlcN-1-P) to produce N-acetylglucosamine-1-phosphate (GlcNAc-1-P), which is converted into UDP-GlcNAc by the transfer of uridine 5-monophosphate (from uridine 5-triphosphate), a reaction catalyzed by the N-terminal domain.</text>
</comment>
<comment type="catalytic activity">
    <reaction evidence="1">
        <text>alpha-D-glucosamine 1-phosphate + acetyl-CoA = N-acetyl-alpha-D-glucosamine 1-phosphate + CoA + H(+)</text>
        <dbReference type="Rhea" id="RHEA:13725"/>
        <dbReference type="ChEBI" id="CHEBI:15378"/>
        <dbReference type="ChEBI" id="CHEBI:57287"/>
        <dbReference type="ChEBI" id="CHEBI:57288"/>
        <dbReference type="ChEBI" id="CHEBI:57776"/>
        <dbReference type="ChEBI" id="CHEBI:58516"/>
        <dbReference type="EC" id="2.3.1.157"/>
    </reaction>
</comment>
<comment type="catalytic activity">
    <reaction evidence="1">
        <text>N-acetyl-alpha-D-glucosamine 1-phosphate + UTP + H(+) = UDP-N-acetyl-alpha-D-glucosamine + diphosphate</text>
        <dbReference type="Rhea" id="RHEA:13509"/>
        <dbReference type="ChEBI" id="CHEBI:15378"/>
        <dbReference type="ChEBI" id="CHEBI:33019"/>
        <dbReference type="ChEBI" id="CHEBI:46398"/>
        <dbReference type="ChEBI" id="CHEBI:57705"/>
        <dbReference type="ChEBI" id="CHEBI:57776"/>
        <dbReference type="EC" id="2.7.7.23"/>
    </reaction>
</comment>
<comment type="cofactor">
    <cofactor evidence="1">
        <name>Mg(2+)</name>
        <dbReference type="ChEBI" id="CHEBI:18420"/>
    </cofactor>
    <text evidence="1">Binds 1 Mg(2+) ion per subunit.</text>
</comment>
<comment type="pathway">
    <text evidence="1">Nucleotide-sugar biosynthesis; UDP-N-acetyl-alpha-D-glucosamine biosynthesis; N-acetyl-alpha-D-glucosamine 1-phosphate from alpha-D-glucosamine 6-phosphate (route II): step 2/2.</text>
</comment>
<comment type="pathway">
    <text evidence="1">Nucleotide-sugar biosynthesis; UDP-N-acetyl-alpha-D-glucosamine biosynthesis; UDP-N-acetyl-alpha-D-glucosamine from N-acetyl-alpha-D-glucosamine 1-phosphate: step 1/1.</text>
</comment>
<comment type="pathway">
    <text evidence="1">Bacterial outer membrane biogenesis; LPS lipid A biosynthesis.</text>
</comment>
<comment type="subunit">
    <text evidence="1">Homotrimer.</text>
</comment>
<comment type="subcellular location">
    <subcellularLocation>
        <location evidence="1">Cytoplasm</location>
    </subcellularLocation>
</comment>
<comment type="similarity">
    <text evidence="1">In the N-terminal section; belongs to the N-acetylglucosamine-1-phosphate uridyltransferase family.</text>
</comment>
<comment type="similarity">
    <text evidence="1">In the C-terminal section; belongs to the transferase hexapeptide repeat family.</text>
</comment>
<organism>
    <name type="scientific">Nitrosomonas europaea (strain ATCC 19718 / CIP 103999 / KCTC 2705 / NBRC 14298)</name>
    <dbReference type="NCBI Taxonomy" id="228410"/>
    <lineage>
        <taxon>Bacteria</taxon>
        <taxon>Pseudomonadati</taxon>
        <taxon>Pseudomonadota</taxon>
        <taxon>Betaproteobacteria</taxon>
        <taxon>Nitrosomonadales</taxon>
        <taxon>Nitrosomonadaceae</taxon>
        <taxon>Nitrosomonas</taxon>
    </lineage>
</organism>
<protein>
    <recommendedName>
        <fullName evidence="1">Bifunctional protein GlmU</fullName>
    </recommendedName>
    <domain>
        <recommendedName>
            <fullName evidence="1">UDP-N-acetylglucosamine pyrophosphorylase</fullName>
            <ecNumber evidence="1">2.7.7.23</ecNumber>
        </recommendedName>
        <alternativeName>
            <fullName evidence="1">N-acetylglucosamine-1-phosphate uridyltransferase</fullName>
        </alternativeName>
    </domain>
    <domain>
        <recommendedName>
            <fullName evidence="1">Glucosamine-1-phosphate N-acetyltransferase</fullName>
            <ecNumber evidence="1">2.3.1.157</ecNumber>
        </recommendedName>
    </domain>
</protein>
<dbReference type="EC" id="2.7.7.23" evidence="1"/>
<dbReference type="EC" id="2.3.1.157" evidence="1"/>
<dbReference type="EMBL" id="AL954747">
    <property type="protein sequence ID" value="CAD84119.1"/>
    <property type="molecule type" value="Genomic_DNA"/>
</dbReference>
<dbReference type="RefSeq" id="WP_011110853.1">
    <property type="nucleotide sequence ID" value="NC_004757.1"/>
</dbReference>
<dbReference type="SMR" id="Q82XP7"/>
<dbReference type="STRING" id="228410.NE0208"/>
<dbReference type="GeneID" id="87103415"/>
<dbReference type="KEGG" id="neu:NE0208"/>
<dbReference type="eggNOG" id="COG1207">
    <property type="taxonomic scope" value="Bacteria"/>
</dbReference>
<dbReference type="HOGENOM" id="CLU_029499_15_2_4"/>
<dbReference type="OrthoDB" id="9775031at2"/>
<dbReference type="PhylomeDB" id="Q82XP7"/>
<dbReference type="UniPathway" id="UPA00113">
    <property type="reaction ID" value="UER00532"/>
</dbReference>
<dbReference type="UniPathway" id="UPA00113">
    <property type="reaction ID" value="UER00533"/>
</dbReference>
<dbReference type="UniPathway" id="UPA00973"/>
<dbReference type="Proteomes" id="UP000001416">
    <property type="component" value="Chromosome"/>
</dbReference>
<dbReference type="GO" id="GO:0005737">
    <property type="term" value="C:cytoplasm"/>
    <property type="evidence" value="ECO:0007669"/>
    <property type="project" value="UniProtKB-SubCell"/>
</dbReference>
<dbReference type="GO" id="GO:0016020">
    <property type="term" value="C:membrane"/>
    <property type="evidence" value="ECO:0007669"/>
    <property type="project" value="GOC"/>
</dbReference>
<dbReference type="GO" id="GO:0019134">
    <property type="term" value="F:glucosamine-1-phosphate N-acetyltransferase activity"/>
    <property type="evidence" value="ECO:0007669"/>
    <property type="project" value="UniProtKB-UniRule"/>
</dbReference>
<dbReference type="GO" id="GO:0000287">
    <property type="term" value="F:magnesium ion binding"/>
    <property type="evidence" value="ECO:0007669"/>
    <property type="project" value="UniProtKB-UniRule"/>
</dbReference>
<dbReference type="GO" id="GO:0003977">
    <property type="term" value="F:UDP-N-acetylglucosamine diphosphorylase activity"/>
    <property type="evidence" value="ECO:0007669"/>
    <property type="project" value="UniProtKB-UniRule"/>
</dbReference>
<dbReference type="GO" id="GO:0000902">
    <property type="term" value="P:cell morphogenesis"/>
    <property type="evidence" value="ECO:0007669"/>
    <property type="project" value="UniProtKB-UniRule"/>
</dbReference>
<dbReference type="GO" id="GO:0071555">
    <property type="term" value="P:cell wall organization"/>
    <property type="evidence" value="ECO:0007669"/>
    <property type="project" value="UniProtKB-KW"/>
</dbReference>
<dbReference type="GO" id="GO:0009245">
    <property type="term" value="P:lipid A biosynthetic process"/>
    <property type="evidence" value="ECO:0007669"/>
    <property type="project" value="UniProtKB-UniRule"/>
</dbReference>
<dbReference type="GO" id="GO:0009252">
    <property type="term" value="P:peptidoglycan biosynthetic process"/>
    <property type="evidence" value="ECO:0007669"/>
    <property type="project" value="UniProtKB-UniRule"/>
</dbReference>
<dbReference type="GO" id="GO:0008360">
    <property type="term" value="P:regulation of cell shape"/>
    <property type="evidence" value="ECO:0007669"/>
    <property type="project" value="UniProtKB-KW"/>
</dbReference>
<dbReference type="GO" id="GO:0006048">
    <property type="term" value="P:UDP-N-acetylglucosamine biosynthetic process"/>
    <property type="evidence" value="ECO:0007669"/>
    <property type="project" value="UniProtKB-UniPathway"/>
</dbReference>
<dbReference type="CDD" id="cd02540">
    <property type="entry name" value="GT2_GlmU_N_bac"/>
    <property type="match status" value="1"/>
</dbReference>
<dbReference type="CDD" id="cd03353">
    <property type="entry name" value="LbH_GlmU_C"/>
    <property type="match status" value="1"/>
</dbReference>
<dbReference type="Gene3D" id="2.160.10.10">
    <property type="entry name" value="Hexapeptide repeat proteins"/>
    <property type="match status" value="1"/>
</dbReference>
<dbReference type="Gene3D" id="3.90.550.10">
    <property type="entry name" value="Spore Coat Polysaccharide Biosynthesis Protein SpsA, Chain A"/>
    <property type="match status" value="1"/>
</dbReference>
<dbReference type="HAMAP" id="MF_01631">
    <property type="entry name" value="GlmU"/>
    <property type="match status" value="1"/>
</dbReference>
<dbReference type="InterPro" id="IPR005882">
    <property type="entry name" value="Bifunctional_GlmU"/>
</dbReference>
<dbReference type="InterPro" id="IPR050065">
    <property type="entry name" value="GlmU-like"/>
</dbReference>
<dbReference type="InterPro" id="IPR038009">
    <property type="entry name" value="GlmU_C_LbH"/>
</dbReference>
<dbReference type="InterPro" id="IPR001451">
    <property type="entry name" value="Hexapep"/>
</dbReference>
<dbReference type="InterPro" id="IPR025877">
    <property type="entry name" value="MobA-like_NTP_Trfase"/>
</dbReference>
<dbReference type="InterPro" id="IPR029044">
    <property type="entry name" value="Nucleotide-diphossugar_trans"/>
</dbReference>
<dbReference type="InterPro" id="IPR011004">
    <property type="entry name" value="Trimer_LpxA-like_sf"/>
</dbReference>
<dbReference type="NCBIfam" id="TIGR01173">
    <property type="entry name" value="glmU"/>
    <property type="match status" value="1"/>
</dbReference>
<dbReference type="PANTHER" id="PTHR43584:SF3">
    <property type="entry name" value="BIFUNCTIONAL PROTEIN GLMU"/>
    <property type="match status" value="1"/>
</dbReference>
<dbReference type="PANTHER" id="PTHR43584">
    <property type="entry name" value="NUCLEOTIDYL TRANSFERASE"/>
    <property type="match status" value="1"/>
</dbReference>
<dbReference type="Pfam" id="PF00132">
    <property type="entry name" value="Hexapep"/>
    <property type="match status" value="3"/>
</dbReference>
<dbReference type="Pfam" id="PF12804">
    <property type="entry name" value="NTP_transf_3"/>
    <property type="match status" value="1"/>
</dbReference>
<dbReference type="SUPFAM" id="SSF53448">
    <property type="entry name" value="Nucleotide-diphospho-sugar transferases"/>
    <property type="match status" value="1"/>
</dbReference>
<dbReference type="SUPFAM" id="SSF51161">
    <property type="entry name" value="Trimeric LpxA-like enzymes"/>
    <property type="match status" value="1"/>
</dbReference>
<reference key="1">
    <citation type="journal article" date="2003" name="J. Bacteriol.">
        <title>Complete genome sequence of the ammonia-oxidizing bacterium and obligate chemolithoautotroph Nitrosomonas europaea.</title>
        <authorList>
            <person name="Chain P."/>
            <person name="Lamerdin J.E."/>
            <person name="Larimer F.W."/>
            <person name="Regala W."/>
            <person name="Lao V."/>
            <person name="Land M.L."/>
            <person name="Hauser L."/>
            <person name="Hooper A.B."/>
            <person name="Klotz M.G."/>
            <person name="Norton J."/>
            <person name="Sayavedra-Soto L.A."/>
            <person name="Arciero D.M."/>
            <person name="Hommes N.G."/>
            <person name="Whittaker M.M."/>
            <person name="Arp D.J."/>
        </authorList>
    </citation>
    <scope>NUCLEOTIDE SEQUENCE [LARGE SCALE GENOMIC DNA]</scope>
    <source>
        <strain>ATCC 19718 / CIP 103999 / KCTC 2705 / NBRC 14298</strain>
    </source>
</reference>
<proteinExistence type="inferred from homology"/>
<feature type="chain" id="PRO_0000233808" description="Bifunctional protein GlmU">
    <location>
        <begin position="1"/>
        <end position="458"/>
    </location>
</feature>
<feature type="region of interest" description="Pyrophosphorylase" evidence="1">
    <location>
        <begin position="1"/>
        <end position="230"/>
    </location>
</feature>
<feature type="region of interest" description="Linker" evidence="1">
    <location>
        <begin position="231"/>
        <end position="251"/>
    </location>
</feature>
<feature type="region of interest" description="N-acetyltransferase" evidence="1">
    <location>
        <begin position="252"/>
        <end position="458"/>
    </location>
</feature>
<feature type="active site" description="Proton acceptor" evidence="1">
    <location>
        <position position="364"/>
    </location>
</feature>
<feature type="binding site" evidence="1">
    <location>
        <begin position="9"/>
        <end position="12"/>
    </location>
    <ligand>
        <name>UDP-N-acetyl-alpha-D-glucosamine</name>
        <dbReference type="ChEBI" id="CHEBI:57705"/>
    </ligand>
</feature>
<feature type="binding site" evidence="1">
    <location>
        <position position="23"/>
    </location>
    <ligand>
        <name>UDP-N-acetyl-alpha-D-glucosamine</name>
        <dbReference type="ChEBI" id="CHEBI:57705"/>
    </ligand>
</feature>
<feature type="binding site" evidence="1">
    <location>
        <position position="75"/>
    </location>
    <ligand>
        <name>UDP-N-acetyl-alpha-D-glucosamine</name>
        <dbReference type="ChEBI" id="CHEBI:57705"/>
    </ligand>
</feature>
<feature type="binding site" evidence="1">
    <location>
        <begin position="80"/>
        <end position="81"/>
    </location>
    <ligand>
        <name>UDP-N-acetyl-alpha-D-glucosamine</name>
        <dbReference type="ChEBI" id="CHEBI:57705"/>
    </ligand>
</feature>
<feature type="binding site" evidence="1">
    <location>
        <position position="104"/>
    </location>
    <ligand>
        <name>Mg(2+)</name>
        <dbReference type="ChEBI" id="CHEBI:18420"/>
    </ligand>
</feature>
<feature type="binding site" evidence="1">
    <location>
        <position position="139"/>
    </location>
    <ligand>
        <name>UDP-N-acetyl-alpha-D-glucosamine</name>
        <dbReference type="ChEBI" id="CHEBI:57705"/>
    </ligand>
</feature>
<feature type="binding site" evidence="1">
    <location>
        <position position="155"/>
    </location>
    <ligand>
        <name>UDP-N-acetyl-alpha-D-glucosamine</name>
        <dbReference type="ChEBI" id="CHEBI:57705"/>
    </ligand>
</feature>
<feature type="binding site" evidence="1">
    <location>
        <position position="170"/>
    </location>
    <ligand>
        <name>UDP-N-acetyl-alpha-D-glucosamine</name>
        <dbReference type="ChEBI" id="CHEBI:57705"/>
    </ligand>
</feature>
<feature type="binding site" evidence="1">
    <location>
        <position position="228"/>
    </location>
    <ligand>
        <name>Mg(2+)</name>
        <dbReference type="ChEBI" id="CHEBI:18420"/>
    </ligand>
</feature>
<feature type="binding site" evidence="1">
    <location>
        <position position="228"/>
    </location>
    <ligand>
        <name>UDP-N-acetyl-alpha-D-glucosamine</name>
        <dbReference type="ChEBI" id="CHEBI:57705"/>
    </ligand>
</feature>
<feature type="binding site" evidence="1">
    <location>
        <position position="334"/>
    </location>
    <ligand>
        <name>UDP-N-acetyl-alpha-D-glucosamine</name>
        <dbReference type="ChEBI" id="CHEBI:57705"/>
    </ligand>
</feature>
<feature type="binding site" evidence="1">
    <location>
        <position position="352"/>
    </location>
    <ligand>
        <name>UDP-N-acetyl-alpha-D-glucosamine</name>
        <dbReference type="ChEBI" id="CHEBI:57705"/>
    </ligand>
</feature>
<feature type="binding site" evidence="1">
    <location>
        <position position="367"/>
    </location>
    <ligand>
        <name>UDP-N-acetyl-alpha-D-glucosamine</name>
        <dbReference type="ChEBI" id="CHEBI:57705"/>
    </ligand>
</feature>
<feature type="binding site" evidence="1">
    <location>
        <position position="378"/>
    </location>
    <ligand>
        <name>UDP-N-acetyl-alpha-D-glucosamine</name>
        <dbReference type="ChEBI" id="CHEBI:57705"/>
    </ligand>
</feature>
<feature type="binding site" evidence="1">
    <location>
        <position position="381"/>
    </location>
    <ligand>
        <name>acetyl-CoA</name>
        <dbReference type="ChEBI" id="CHEBI:57288"/>
    </ligand>
</feature>
<feature type="binding site" evidence="1">
    <location>
        <begin position="387"/>
        <end position="388"/>
    </location>
    <ligand>
        <name>acetyl-CoA</name>
        <dbReference type="ChEBI" id="CHEBI:57288"/>
    </ligand>
</feature>
<feature type="binding site" evidence="1">
    <location>
        <position position="406"/>
    </location>
    <ligand>
        <name>acetyl-CoA</name>
        <dbReference type="ChEBI" id="CHEBI:57288"/>
    </ligand>
</feature>
<feature type="binding site" evidence="1">
    <location>
        <position position="424"/>
    </location>
    <ligand>
        <name>acetyl-CoA</name>
        <dbReference type="ChEBI" id="CHEBI:57288"/>
    </ligand>
</feature>
<feature type="binding site" evidence="1">
    <location>
        <position position="441"/>
    </location>
    <ligand>
        <name>acetyl-CoA</name>
        <dbReference type="ChEBI" id="CHEBI:57288"/>
    </ligand>
</feature>
<name>GLMU_NITEU</name>
<evidence type="ECO:0000255" key="1">
    <source>
        <dbReference type="HAMAP-Rule" id="MF_01631"/>
    </source>
</evidence>